<feature type="chain" id="PRO_0000200776" description="ATP-dependent RNA helicase RhlB">
    <location>
        <begin position="1"/>
        <end position="423"/>
    </location>
</feature>
<feature type="domain" description="Helicase ATP-binding" evidence="1">
    <location>
        <begin position="40"/>
        <end position="217"/>
    </location>
</feature>
<feature type="domain" description="Helicase C-terminal" evidence="1">
    <location>
        <begin position="241"/>
        <end position="388"/>
    </location>
</feature>
<feature type="region of interest" description="Disordered" evidence="2">
    <location>
        <begin position="397"/>
        <end position="423"/>
    </location>
</feature>
<feature type="short sequence motif" description="Q motif">
    <location>
        <begin position="9"/>
        <end position="37"/>
    </location>
</feature>
<feature type="short sequence motif" description="DEAD box">
    <location>
        <begin position="163"/>
        <end position="166"/>
    </location>
</feature>
<feature type="compositionally biased region" description="Low complexity" evidence="2">
    <location>
        <begin position="400"/>
        <end position="410"/>
    </location>
</feature>
<feature type="compositionally biased region" description="Basic residues" evidence="2">
    <location>
        <begin position="413"/>
        <end position="423"/>
    </location>
</feature>
<feature type="binding site" evidence="1">
    <location>
        <begin position="53"/>
        <end position="60"/>
    </location>
    <ligand>
        <name>ATP</name>
        <dbReference type="ChEBI" id="CHEBI:30616"/>
    </ligand>
</feature>
<accession>Q9CJS1</accession>
<organism>
    <name type="scientific">Pasteurella multocida (strain Pm70)</name>
    <dbReference type="NCBI Taxonomy" id="272843"/>
    <lineage>
        <taxon>Bacteria</taxon>
        <taxon>Pseudomonadati</taxon>
        <taxon>Pseudomonadota</taxon>
        <taxon>Gammaproteobacteria</taxon>
        <taxon>Pasteurellales</taxon>
        <taxon>Pasteurellaceae</taxon>
        <taxon>Pasteurella</taxon>
    </lineage>
</organism>
<name>RHLB_PASMU</name>
<protein>
    <recommendedName>
        <fullName evidence="1">ATP-dependent RNA helicase RhlB</fullName>
        <ecNumber evidence="1">3.6.4.13</ecNumber>
    </recommendedName>
</protein>
<reference key="1">
    <citation type="journal article" date="2001" name="Proc. Natl. Acad. Sci. U.S.A.">
        <title>Complete genomic sequence of Pasteurella multocida Pm70.</title>
        <authorList>
            <person name="May B.J."/>
            <person name="Zhang Q."/>
            <person name="Li L.L."/>
            <person name="Paustian M.L."/>
            <person name="Whittam T.S."/>
            <person name="Kapur V."/>
        </authorList>
    </citation>
    <scope>NUCLEOTIDE SEQUENCE [LARGE SCALE GENOMIC DNA]</scope>
    <source>
        <strain>Pm70</strain>
    </source>
</reference>
<comment type="function">
    <text evidence="1">DEAD-box RNA helicase involved in RNA degradation. Has RNA-dependent ATPase activity and unwinds double-stranded RNA.</text>
</comment>
<comment type="catalytic activity">
    <reaction evidence="1">
        <text>ATP + H2O = ADP + phosphate + H(+)</text>
        <dbReference type="Rhea" id="RHEA:13065"/>
        <dbReference type="ChEBI" id="CHEBI:15377"/>
        <dbReference type="ChEBI" id="CHEBI:15378"/>
        <dbReference type="ChEBI" id="CHEBI:30616"/>
        <dbReference type="ChEBI" id="CHEBI:43474"/>
        <dbReference type="ChEBI" id="CHEBI:456216"/>
        <dbReference type="EC" id="3.6.4.13"/>
    </reaction>
</comment>
<comment type="subunit">
    <text evidence="1">Component of the RNA degradosome, which is a multiprotein complex involved in RNA processing and mRNA degradation.</text>
</comment>
<comment type="subcellular location">
    <subcellularLocation>
        <location evidence="1">Cytoplasm</location>
    </subcellularLocation>
</comment>
<comment type="similarity">
    <text evidence="1">Belongs to the DEAD box helicase family. RhlB subfamily.</text>
</comment>
<proteinExistence type="inferred from homology"/>
<evidence type="ECO:0000255" key="1">
    <source>
        <dbReference type="HAMAP-Rule" id="MF_00661"/>
    </source>
</evidence>
<evidence type="ECO:0000256" key="2">
    <source>
        <dbReference type="SAM" id="MobiDB-lite"/>
    </source>
</evidence>
<keyword id="KW-0067">ATP-binding</keyword>
<keyword id="KW-0963">Cytoplasm</keyword>
<keyword id="KW-0347">Helicase</keyword>
<keyword id="KW-0378">Hydrolase</keyword>
<keyword id="KW-0547">Nucleotide-binding</keyword>
<keyword id="KW-1185">Reference proteome</keyword>
<keyword id="KW-0694">RNA-binding</keyword>
<dbReference type="EC" id="3.6.4.13" evidence="1"/>
<dbReference type="EMBL" id="AE004439">
    <property type="protein sequence ID" value="AAK04005.1"/>
    <property type="molecule type" value="Genomic_DNA"/>
</dbReference>
<dbReference type="RefSeq" id="WP_005752382.1">
    <property type="nucleotide sequence ID" value="NC_002663.1"/>
</dbReference>
<dbReference type="SMR" id="Q9CJS1"/>
<dbReference type="STRING" id="272843.PM1921"/>
<dbReference type="EnsemblBacteria" id="AAK04005">
    <property type="protein sequence ID" value="AAK04005"/>
    <property type="gene ID" value="PM1921"/>
</dbReference>
<dbReference type="KEGG" id="pmu:PM1921"/>
<dbReference type="HOGENOM" id="CLU_003041_1_3_6"/>
<dbReference type="OrthoDB" id="9805696at2"/>
<dbReference type="Proteomes" id="UP000000809">
    <property type="component" value="Chromosome"/>
</dbReference>
<dbReference type="GO" id="GO:0005829">
    <property type="term" value="C:cytosol"/>
    <property type="evidence" value="ECO:0007669"/>
    <property type="project" value="TreeGrafter"/>
</dbReference>
<dbReference type="GO" id="GO:0005524">
    <property type="term" value="F:ATP binding"/>
    <property type="evidence" value="ECO:0007669"/>
    <property type="project" value="UniProtKB-UniRule"/>
</dbReference>
<dbReference type="GO" id="GO:0016887">
    <property type="term" value="F:ATP hydrolysis activity"/>
    <property type="evidence" value="ECO:0007669"/>
    <property type="project" value="RHEA"/>
</dbReference>
<dbReference type="GO" id="GO:0003723">
    <property type="term" value="F:RNA binding"/>
    <property type="evidence" value="ECO:0007669"/>
    <property type="project" value="UniProtKB-UniRule"/>
</dbReference>
<dbReference type="GO" id="GO:0003724">
    <property type="term" value="F:RNA helicase activity"/>
    <property type="evidence" value="ECO:0007669"/>
    <property type="project" value="UniProtKB-UniRule"/>
</dbReference>
<dbReference type="GO" id="GO:0006401">
    <property type="term" value="P:RNA catabolic process"/>
    <property type="evidence" value="ECO:0007669"/>
    <property type="project" value="UniProtKB-UniRule"/>
</dbReference>
<dbReference type="CDD" id="cd00268">
    <property type="entry name" value="DEADc"/>
    <property type="match status" value="1"/>
</dbReference>
<dbReference type="CDD" id="cd18787">
    <property type="entry name" value="SF2_C_DEAD"/>
    <property type="match status" value="1"/>
</dbReference>
<dbReference type="FunFam" id="3.40.50.300:FF:000312">
    <property type="entry name" value="ATP-dependent RNA helicase RhlB"/>
    <property type="match status" value="1"/>
</dbReference>
<dbReference type="Gene3D" id="3.40.50.300">
    <property type="entry name" value="P-loop containing nucleotide triphosphate hydrolases"/>
    <property type="match status" value="2"/>
</dbReference>
<dbReference type="HAMAP" id="MF_00661">
    <property type="entry name" value="DEAD_helicase_RhlB"/>
    <property type="match status" value="1"/>
</dbReference>
<dbReference type="InterPro" id="IPR011545">
    <property type="entry name" value="DEAD/DEAH_box_helicase_dom"/>
</dbReference>
<dbReference type="InterPro" id="IPR050079">
    <property type="entry name" value="DEAD_box_RNA_helicase"/>
</dbReference>
<dbReference type="InterPro" id="IPR014001">
    <property type="entry name" value="Helicase_ATP-bd"/>
</dbReference>
<dbReference type="InterPro" id="IPR001650">
    <property type="entry name" value="Helicase_C-like"/>
</dbReference>
<dbReference type="InterPro" id="IPR027417">
    <property type="entry name" value="P-loop_NTPase"/>
</dbReference>
<dbReference type="InterPro" id="IPR000629">
    <property type="entry name" value="RNA-helicase_DEAD-box_CS"/>
</dbReference>
<dbReference type="InterPro" id="IPR023554">
    <property type="entry name" value="RNA_helicase_ATP-dep_RhlB"/>
</dbReference>
<dbReference type="InterPro" id="IPR014014">
    <property type="entry name" value="RNA_helicase_DEAD_Q_motif"/>
</dbReference>
<dbReference type="NCBIfam" id="NF003419">
    <property type="entry name" value="PRK04837.1"/>
    <property type="match status" value="1"/>
</dbReference>
<dbReference type="PANTHER" id="PTHR47959:SF10">
    <property type="entry name" value="ATP-DEPENDENT RNA HELICASE RHLB"/>
    <property type="match status" value="1"/>
</dbReference>
<dbReference type="PANTHER" id="PTHR47959">
    <property type="entry name" value="ATP-DEPENDENT RNA HELICASE RHLE-RELATED"/>
    <property type="match status" value="1"/>
</dbReference>
<dbReference type="Pfam" id="PF00270">
    <property type="entry name" value="DEAD"/>
    <property type="match status" value="1"/>
</dbReference>
<dbReference type="Pfam" id="PF00271">
    <property type="entry name" value="Helicase_C"/>
    <property type="match status" value="1"/>
</dbReference>
<dbReference type="SMART" id="SM00487">
    <property type="entry name" value="DEXDc"/>
    <property type="match status" value="1"/>
</dbReference>
<dbReference type="SMART" id="SM00490">
    <property type="entry name" value="HELICc"/>
    <property type="match status" value="1"/>
</dbReference>
<dbReference type="SUPFAM" id="SSF52540">
    <property type="entry name" value="P-loop containing nucleoside triphosphate hydrolases"/>
    <property type="match status" value="1"/>
</dbReference>
<dbReference type="PROSITE" id="PS00039">
    <property type="entry name" value="DEAD_ATP_HELICASE"/>
    <property type="match status" value="1"/>
</dbReference>
<dbReference type="PROSITE" id="PS51192">
    <property type="entry name" value="HELICASE_ATP_BIND_1"/>
    <property type="match status" value="1"/>
</dbReference>
<dbReference type="PROSITE" id="PS51194">
    <property type="entry name" value="HELICASE_CTER"/>
    <property type="match status" value="1"/>
</dbReference>
<dbReference type="PROSITE" id="PS51195">
    <property type="entry name" value="Q_MOTIF"/>
    <property type="match status" value="1"/>
</dbReference>
<gene>
    <name evidence="1" type="primary">rhlB</name>
    <name type="ordered locus">PM1921</name>
</gene>
<sequence length="423" mass="47503">MQNNYLSQLRFSDLPLHHQVLAALQEKGFDYCTPIQALSLPMSLAGKDVAGQAQTGTGKTMAFLTATFHHLLTQQGDKGGRQPRALILAPTRELAVQINNDAALLTKATGLKTGLAYGGDGYEKQLKAIEQGVDILIGTTGRVIDYVKQGIVRLDKIQVVVLDEADRMFDLGFIKDIRYLLRKCPAPQHRLTMLFSATLSYKVRELAFEDMNDPEYVEIEPLQKTGHRIKEELFYPSNQDKMALLLTLLEEEWPERCIIFANTKHRCEDIWGYLAADGHRVGLLTGDVAQKKRLSLLKQFTEGHLDILVATDVAARGLHISDVSHVFNYDLPDDREDYVHRIGRTGRAGESGVSISFACEEYAMNLPAIEEYISHSIPVSQYDVAALLTLPKPYRIKRGNNNSKNSANSNRTFQKKRSLKRNF</sequence>